<evidence type="ECO:0000255" key="1">
    <source>
        <dbReference type="HAMAP-Rule" id="MF_00175"/>
    </source>
</evidence>
<evidence type="ECO:0000255" key="2">
    <source>
        <dbReference type="PROSITE-ProRule" id="PRU01250"/>
    </source>
</evidence>
<evidence type="ECO:0000256" key="3">
    <source>
        <dbReference type="SAM" id="MobiDB-lite"/>
    </source>
</evidence>
<gene>
    <name evidence="1" type="primary">clpX</name>
    <name type="ordered locus">sll0535</name>
</gene>
<accession>Q55510</accession>
<sequence length="445" mass="49299">MPKYDSHLKCSFCGKSQEQVRKLIAGPGVYICDECVELCNDILDEELLDVPPASTGERDGTGQKQKKSGQPRRRLTLEELPKPTAIKQYLDEYVIGQDEAKKVLSVAVYNHYKRLNLLERNQEIDPGDAVELQKSNILLVGPTGSGKTLLAQTLAKILEVPFAVADATTLTEAGYVGEDVENILLRLLQVADLDVEEAQRGIIYIDEIDKIARKSENPSITRDVSGEGVQQALLKMLEGTVANVPPQGGRKHPYQDCIQIDTSNILFICGGAFVGLEKVIEQRFGKKSMGFVRPGEGPSKEKRTADVLRQAEPDDLVKFGLIPEFIGRIPVMACLNPLDEDALIAILTQPRNAIVKQYQTLLGMDHVELDFQPDAVRAIATEAHRRKTGARALRGIVEELMLDVMYELPSREDLTHCLITREMVEKRSTAELLLHPSSLPKPESA</sequence>
<feature type="chain" id="PRO_0000160443" description="ATP-dependent Clp protease ATP-binding subunit ClpX">
    <location>
        <begin position="1"/>
        <end position="445"/>
    </location>
</feature>
<feature type="domain" description="ClpX-type ZB" evidence="2">
    <location>
        <begin position="1"/>
        <end position="51"/>
    </location>
</feature>
<feature type="region of interest" description="Disordered" evidence="3">
    <location>
        <begin position="50"/>
        <end position="77"/>
    </location>
</feature>
<feature type="compositionally biased region" description="Basic residues" evidence="3">
    <location>
        <begin position="64"/>
        <end position="74"/>
    </location>
</feature>
<feature type="binding site" evidence="2">
    <location>
        <position position="10"/>
    </location>
    <ligand>
        <name>Zn(2+)</name>
        <dbReference type="ChEBI" id="CHEBI:29105"/>
    </ligand>
</feature>
<feature type="binding site" evidence="2">
    <location>
        <position position="13"/>
    </location>
    <ligand>
        <name>Zn(2+)</name>
        <dbReference type="ChEBI" id="CHEBI:29105"/>
    </ligand>
</feature>
<feature type="binding site" evidence="2">
    <location>
        <position position="32"/>
    </location>
    <ligand>
        <name>Zn(2+)</name>
        <dbReference type="ChEBI" id="CHEBI:29105"/>
    </ligand>
</feature>
<feature type="binding site" evidence="2">
    <location>
        <position position="35"/>
    </location>
    <ligand>
        <name>Zn(2+)</name>
        <dbReference type="ChEBI" id="CHEBI:29105"/>
    </ligand>
</feature>
<feature type="binding site" evidence="1">
    <location>
        <begin position="142"/>
        <end position="149"/>
    </location>
    <ligand>
        <name>ATP</name>
        <dbReference type="ChEBI" id="CHEBI:30616"/>
    </ligand>
</feature>
<proteinExistence type="inferred from homology"/>
<dbReference type="EMBL" id="BA000022">
    <property type="protein sequence ID" value="BAA10866.1"/>
    <property type="molecule type" value="Genomic_DNA"/>
</dbReference>
<dbReference type="PIR" id="S76019">
    <property type="entry name" value="S76019"/>
</dbReference>
<dbReference type="SMR" id="Q55510"/>
<dbReference type="FunCoup" id="Q55510">
    <property type="interactions" value="364"/>
</dbReference>
<dbReference type="IntAct" id="Q55510">
    <property type="interactions" value="3"/>
</dbReference>
<dbReference type="STRING" id="1148.gene:10500372"/>
<dbReference type="PaxDb" id="1148-1001376"/>
<dbReference type="EnsemblBacteria" id="BAA10866">
    <property type="protein sequence ID" value="BAA10866"/>
    <property type="gene ID" value="BAA10866"/>
</dbReference>
<dbReference type="KEGG" id="syn:sll0535"/>
<dbReference type="eggNOG" id="COG1219">
    <property type="taxonomic scope" value="Bacteria"/>
</dbReference>
<dbReference type="InParanoid" id="Q55510"/>
<dbReference type="PhylomeDB" id="Q55510"/>
<dbReference type="Proteomes" id="UP000001425">
    <property type="component" value="Chromosome"/>
</dbReference>
<dbReference type="GO" id="GO:0009376">
    <property type="term" value="C:HslUV protease complex"/>
    <property type="evidence" value="ECO:0000318"/>
    <property type="project" value="GO_Central"/>
</dbReference>
<dbReference type="GO" id="GO:0005524">
    <property type="term" value="F:ATP binding"/>
    <property type="evidence" value="ECO:0000318"/>
    <property type="project" value="GO_Central"/>
</dbReference>
<dbReference type="GO" id="GO:0016887">
    <property type="term" value="F:ATP hydrolysis activity"/>
    <property type="evidence" value="ECO:0000318"/>
    <property type="project" value="GO_Central"/>
</dbReference>
<dbReference type="GO" id="GO:0140662">
    <property type="term" value="F:ATP-dependent protein folding chaperone"/>
    <property type="evidence" value="ECO:0007669"/>
    <property type="project" value="InterPro"/>
</dbReference>
<dbReference type="GO" id="GO:0046983">
    <property type="term" value="F:protein dimerization activity"/>
    <property type="evidence" value="ECO:0007669"/>
    <property type="project" value="InterPro"/>
</dbReference>
<dbReference type="GO" id="GO:0051082">
    <property type="term" value="F:unfolded protein binding"/>
    <property type="evidence" value="ECO:0007669"/>
    <property type="project" value="UniProtKB-UniRule"/>
</dbReference>
<dbReference type="GO" id="GO:0008270">
    <property type="term" value="F:zinc ion binding"/>
    <property type="evidence" value="ECO:0007669"/>
    <property type="project" value="InterPro"/>
</dbReference>
<dbReference type="GO" id="GO:0051301">
    <property type="term" value="P:cell division"/>
    <property type="evidence" value="ECO:0000318"/>
    <property type="project" value="GO_Central"/>
</dbReference>
<dbReference type="GO" id="GO:0051603">
    <property type="term" value="P:proteolysis involved in protein catabolic process"/>
    <property type="evidence" value="ECO:0000318"/>
    <property type="project" value="GO_Central"/>
</dbReference>
<dbReference type="CDD" id="cd19497">
    <property type="entry name" value="RecA-like_ClpX"/>
    <property type="match status" value="1"/>
</dbReference>
<dbReference type="FunFam" id="1.10.8.60:FF:000002">
    <property type="entry name" value="ATP-dependent Clp protease ATP-binding subunit ClpX"/>
    <property type="match status" value="1"/>
</dbReference>
<dbReference type="FunFam" id="3.40.50.300:FF:000005">
    <property type="entry name" value="ATP-dependent Clp protease ATP-binding subunit ClpX"/>
    <property type="match status" value="1"/>
</dbReference>
<dbReference type="Gene3D" id="1.10.8.60">
    <property type="match status" value="1"/>
</dbReference>
<dbReference type="Gene3D" id="6.20.220.10">
    <property type="entry name" value="ClpX chaperone, C4-type zinc finger domain"/>
    <property type="match status" value="1"/>
</dbReference>
<dbReference type="Gene3D" id="3.40.50.300">
    <property type="entry name" value="P-loop containing nucleotide triphosphate hydrolases"/>
    <property type="match status" value="1"/>
</dbReference>
<dbReference type="HAMAP" id="MF_00175">
    <property type="entry name" value="ClpX"/>
    <property type="match status" value="1"/>
</dbReference>
<dbReference type="InterPro" id="IPR003593">
    <property type="entry name" value="AAA+_ATPase"/>
</dbReference>
<dbReference type="InterPro" id="IPR050052">
    <property type="entry name" value="ATP-dep_Clp_protease_ClpX"/>
</dbReference>
<dbReference type="InterPro" id="IPR003959">
    <property type="entry name" value="ATPase_AAA_core"/>
</dbReference>
<dbReference type="InterPro" id="IPR019489">
    <property type="entry name" value="Clp_ATPase_C"/>
</dbReference>
<dbReference type="InterPro" id="IPR004487">
    <property type="entry name" value="Clp_protease_ATP-bd_su_ClpX"/>
</dbReference>
<dbReference type="InterPro" id="IPR046425">
    <property type="entry name" value="ClpX_bact"/>
</dbReference>
<dbReference type="InterPro" id="IPR027417">
    <property type="entry name" value="P-loop_NTPase"/>
</dbReference>
<dbReference type="InterPro" id="IPR010603">
    <property type="entry name" value="Znf_CppX_C4"/>
</dbReference>
<dbReference type="InterPro" id="IPR038366">
    <property type="entry name" value="Znf_CppX_C4_sf"/>
</dbReference>
<dbReference type="NCBIfam" id="TIGR00382">
    <property type="entry name" value="clpX"/>
    <property type="match status" value="1"/>
</dbReference>
<dbReference type="NCBIfam" id="NF003745">
    <property type="entry name" value="PRK05342.1"/>
    <property type="match status" value="1"/>
</dbReference>
<dbReference type="PANTHER" id="PTHR48102:SF7">
    <property type="entry name" value="ATP-DEPENDENT CLP PROTEASE ATP-BINDING SUBUNIT CLPX-LIKE, MITOCHONDRIAL"/>
    <property type="match status" value="1"/>
</dbReference>
<dbReference type="PANTHER" id="PTHR48102">
    <property type="entry name" value="ATP-DEPENDENT CLP PROTEASE ATP-BINDING SUBUNIT CLPX-LIKE, MITOCHONDRIAL-RELATED"/>
    <property type="match status" value="1"/>
</dbReference>
<dbReference type="Pfam" id="PF07724">
    <property type="entry name" value="AAA_2"/>
    <property type="match status" value="1"/>
</dbReference>
<dbReference type="Pfam" id="PF10431">
    <property type="entry name" value="ClpB_D2-small"/>
    <property type="match status" value="1"/>
</dbReference>
<dbReference type="Pfam" id="PF06689">
    <property type="entry name" value="zf-C4_ClpX"/>
    <property type="match status" value="1"/>
</dbReference>
<dbReference type="SMART" id="SM00382">
    <property type="entry name" value="AAA"/>
    <property type="match status" value="1"/>
</dbReference>
<dbReference type="SMART" id="SM01086">
    <property type="entry name" value="ClpB_D2-small"/>
    <property type="match status" value="1"/>
</dbReference>
<dbReference type="SMART" id="SM00994">
    <property type="entry name" value="zf-C4_ClpX"/>
    <property type="match status" value="1"/>
</dbReference>
<dbReference type="SUPFAM" id="SSF57716">
    <property type="entry name" value="Glucocorticoid receptor-like (DNA-binding domain)"/>
    <property type="match status" value="1"/>
</dbReference>
<dbReference type="SUPFAM" id="SSF52540">
    <property type="entry name" value="P-loop containing nucleoside triphosphate hydrolases"/>
    <property type="match status" value="1"/>
</dbReference>
<dbReference type="PROSITE" id="PS51902">
    <property type="entry name" value="CLPX_ZB"/>
    <property type="match status" value="1"/>
</dbReference>
<name>CLPX_SYNY3</name>
<organism>
    <name type="scientific">Synechocystis sp. (strain ATCC 27184 / PCC 6803 / Kazusa)</name>
    <dbReference type="NCBI Taxonomy" id="1111708"/>
    <lineage>
        <taxon>Bacteria</taxon>
        <taxon>Bacillati</taxon>
        <taxon>Cyanobacteriota</taxon>
        <taxon>Cyanophyceae</taxon>
        <taxon>Synechococcales</taxon>
        <taxon>Merismopediaceae</taxon>
        <taxon>Synechocystis</taxon>
    </lineage>
</organism>
<reference key="1">
    <citation type="journal article" date="1995" name="DNA Res.">
        <title>Sequence analysis of the genome of the unicellular cyanobacterium Synechocystis sp. strain PCC6803. I. Sequence features in the 1 Mb region from map positions 64% to 92% of the genome.</title>
        <authorList>
            <person name="Kaneko T."/>
            <person name="Tanaka A."/>
            <person name="Sato S."/>
            <person name="Kotani H."/>
            <person name="Sazuka T."/>
            <person name="Miyajima N."/>
            <person name="Sugiura M."/>
            <person name="Tabata S."/>
        </authorList>
    </citation>
    <scope>NUCLEOTIDE SEQUENCE [LARGE SCALE GENOMIC DNA]</scope>
    <source>
        <strain>ATCC 27184 / PCC 6803 / N-1</strain>
    </source>
</reference>
<reference key="2">
    <citation type="journal article" date="1996" name="DNA Res.">
        <title>Sequence analysis of the genome of the unicellular cyanobacterium Synechocystis sp. strain PCC6803. II. Sequence determination of the entire genome and assignment of potential protein-coding regions.</title>
        <authorList>
            <person name="Kaneko T."/>
            <person name="Sato S."/>
            <person name="Kotani H."/>
            <person name="Tanaka A."/>
            <person name="Asamizu E."/>
            <person name="Nakamura Y."/>
            <person name="Miyajima N."/>
            <person name="Hirosawa M."/>
            <person name="Sugiura M."/>
            <person name="Sasamoto S."/>
            <person name="Kimura T."/>
            <person name="Hosouchi T."/>
            <person name="Matsuno A."/>
            <person name="Muraki A."/>
            <person name="Nakazaki N."/>
            <person name="Naruo K."/>
            <person name="Okumura S."/>
            <person name="Shimpo S."/>
            <person name="Takeuchi C."/>
            <person name="Wada T."/>
            <person name="Watanabe A."/>
            <person name="Yamada M."/>
            <person name="Yasuda M."/>
            <person name="Tabata S."/>
        </authorList>
    </citation>
    <scope>NUCLEOTIDE SEQUENCE [LARGE SCALE GENOMIC DNA]</scope>
    <source>
        <strain>ATCC 27184 / PCC 6803 / Kazusa</strain>
    </source>
</reference>
<comment type="function">
    <text evidence="1">ATP-dependent specificity component of the Clp protease. It directs the protease to specific substrates. Can perform chaperone functions in the absence of ClpP.</text>
</comment>
<comment type="subunit">
    <text evidence="1">Component of the ClpX-ClpP complex. Forms a hexameric ring that, in the presence of ATP, binds to fourteen ClpP subunits assembled into a disk-like structure with a central cavity, resembling the structure of eukaryotic proteasomes.</text>
</comment>
<comment type="similarity">
    <text evidence="1">Belongs to the ClpX chaperone family.</text>
</comment>
<keyword id="KW-0067">ATP-binding</keyword>
<keyword id="KW-0143">Chaperone</keyword>
<keyword id="KW-0479">Metal-binding</keyword>
<keyword id="KW-0547">Nucleotide-binding</keyword>
<keyword id="KW-1185">Reference proteome</keyword>
<keyword id="KW-0862">Zinc</keyword>
<protein>
    <recommendedName>
        <fullName evidence="1">ATP-dependent Clp protease ATP-binding subunit ClpX</fullName>
    </recommendedName>
</protein>